<protein>
    <recommendedName>
        <fullName evidence="2">UDP-N-acetylglucosamine--N-acetylmuramyl-(pentapeptide) pyrophosphoryl-undecaprenol N-acetylglucosamine transferase</fullName>
        <ecNumber evidence="2">2.4.1.227</ecNumber>
    </recommendedName>
    <alternativeName>
        <fullName evidence="2">Undecaprenyl-PP-MurNAc-pentapeptide-UDPGlcNAc GlcNAc transferase</fullName>
    </alternativeName>
</protein>
<comment type="function">
    <text evidence="2">Cell wall formation. Catalyzes the transfer of a GlcNAc subunit on undecaprenyl-pyrophosphoryl-MurNAc-pentapeptide (lipid intermediate I) to form undecaprenyl-pyrophosphoryl-MurNAc-(pentapeptide)GlcNAc (lipid intermediate II).</text>
</comment>
<comment type="catalytic activity">
    <reaction evidence="2">
        <text>di-trans,octa-cis-undecaprenyl diphospho-N-acetyl-alpha-D-muramoyl-L-alanyl-D-glutamyl-meso-2,6-diaminopimeloyl-D-alanyl-D-alanine + UDP-N-acetyl-alpha-D-glucosamine = di-trans,octa-cis-undecaprenyl diphospho-[N-acetyl-alpha-D-glucosaminyl-(1-&gt;4)]-N-acetyl-alpha-D-muramoyl-L-alanyl-D-glutamyl-meso-2,6-diaminopimeloyl-D-alanyl-D-alanine + UDP + H(+)</text>
        <dbReference type="Rhea" id="RHEA:31227"/>
        <dbReference type="ChEBI" id="CHEBI:15378"/>
        <dbReference type="ChEBI" id="CHEBI:57705"/>
        <dbReference type="ChEBI" id="CHEBI:58223"/>
        <dbReference type="ChEBI" id="CHEBI:61387"/>
        <dbReference type="ChEBI" id="CHEBI:61388"/>
        <dbReference type="EC" id="2.4.1.227"/>
    </reaction>
</comment>
<comment type="pathway">
    <text evidence="2">Cell wall biogenesis; peptidoglycan biosynthesis.</text>
</comment>
<comment type="subcellular location">
    <subcellularLocation>
        <location evidence="2">Cell inner membrane</location>
        <topology evidence="2">Peripheral membrane protein</topology>
        <orientation evidence="2">Cytoplasmic side</orientation>
    </subcellularLocation>
</comment>
<comment type="similarity">
    <text evidence="2">Belongs to the glycosyltransferase 28 family. MurG subfamily.</text>
</comment>
<name>MURG_ECOL6</name>
<reference key="1">
    <citation type="journal article" date="2002" name="Proc. Natl. Acad. Sci. U.S.A.">
        <title>Extensive mosaic structure revealed by the complete genome sequence of uropathogenic Escherichia coli.</title>
        <authorList>
            <person name="Welch R.A."/>
            <person name="Burland V."/>
            <person name="Plunkett G. III"/>
            <person name="Redford P."/>
            <person name="Roesch P."/>
            <person name="Rasko D."/>
            <person name="Buckles E.L."/>
            <person name="Liou S.-R."/>
            <person name="Boutin A."/>
            <person name="Hackett J."/>
            <person name="Stroud D."/>
            <person name="Mayhew G.F."/>
            <person name="Rose D.J."/>
            <person name="Zhou S."/>
            <person name="Schwartz D.C."/>
            <person name="Perna N.T."/>
            <person name="Mobley H.L.T."/>
            <person name="Donnenberg M.S."/>
            <person name="Blattner F.R."/>
        </authorList>
    </citation>
    <scope>NUCLEOTIDE SEQUENCE [LARGE SCALE GENOMIC DNA]</scope>
    <source>
        <strain>CFT073 / ATCC 700928 / UPEC</strain>
    </source>
</reference>
<dbReference type="EC" id="2.4.1.227" evidence="2"/>
<dbReference type="EMBL" id="AE014075">
    <property type="protein sequence ID" value="AAN78606.1"/>
    <property type="molecule type" value="Genomic_DNA"/>
</dbReference>
<dbReference type="RefSeq" id="WP_000016564.1">
    <property type="nucleotide sequence ID" value="NZ_CP051263.1"/>
</dbReference>
<dbReference type="SMR" id="Q8FL64"/>
<dbReference type="STRING" id="199310.c0108"/>
<dbReference type="CAZy" id="GT28">
    <property type="family name" value="Glycosyltransferase Family 28"/>
</dbReference>
<dbReference type="KEGG" id="ecc:c0108"/>
<dbReference type="eggNOG" id="COG0707">
    <property type="taxonomic scope" value="Bacteria"/>
</dbReference>
<dbReference type="HOGENOM" id="CLU_037404_2_0_6"/>
<dbReference type="BioCyc" id="ECOL199310:C0108-MONOMER"/>
<dbReference type="UniPathway" id="UPA00219"/>
<dbReference type="Proteomes" id="UP000001410">
    <property type="component" value="Chromosome"/>
</dbReference>
<dbReference type="GO" id="GO:0005886">
    <property type="term" value="C:plasma membrane"/>
    <property type="evidence" value="ECO:0007669"/>
    <property type="project" value="UniProtKB-SubCell"/>
</dbReference>
<dbReference type="GO" id="GO:0051991">
    <property type="term" value="F:UDP-N-acetyl-D-glucosamine:N-acetylmuramoyl-L-alanyl-D-glutamyl-meso-2,6-diaminopimelyl-D-alanyl-D-alanine-diphosphoundecaprenol 4-beta-N-acetylglucosaminlytransferase activity"/>
    <property type="evidence" value="ECO:0007669"/>
    <property type="project" value="RHEA"/>
</dbReference>
<dbReference type="GO" id="GO:0050511">
    <property type="term" value="F:undecaprenyldiphospho-muramoylpentapeptide beta-N-acetylglucosaminyltransferase activity"/>
    <property type="evidence" value="ECO:0007669"/>
    <property type="project" value="UniProtKB-UniRule"/>
</dbReference>
<dbReference type="GO" id="GO:0005975">
    <property type="term" value="P:carbohydrate metabolic process"/>
    <property type="evidence" value="ECO:0007669"/>
    <property type="project" value="InterPro"/>
</dbReference>
<dbReference type="GO" id="GO:0051301">
    <property type="term" value="P:cell division"/>
    <property type="evidence" value="ECO:0007669"/>
    <property type="project" value="UniProtKB-KW"/>
</dbReference>
<dbReference type="GO" id="GO:0071555">
    <property type="term" value="P:cell wall organization"/>
    <property type="evidence" value="ECO:0007669"/>
    <property type="project" value="UniProtKB-KW"/>
</dbReference>
<dbReference type="GO" id="GO:0030259">
    <property type="term" value="P:lipid glycosylation"/>
    <property type="evidence" value="ECO:0007669"/>
    <property type="project" value="UniProtKB-UniRule"/>
</dbReference>
<dbReference type="GO" id="GO:0009252">
    <property type="term" value="P:peptidoglycan biosynthetic process"/>
    <property type="evidence" value="ECO:0007669"/>
    <property type="project" value="UniProtKB-UniRule"/>
</dbReference>
<dbReference type="GO" id="GO:0008360">
    <property type="term" value="P:regulation of cell shape"/>
    <property type="evidence" value="ECO:0007669"/>
    <property type="project" value="UniProtKB-KW"/>
</dbReference>
<dbReference type="CDD" id="cd03785">
    <property type="entry name" value="GT28_MurG"/>
    <property type="match status" value="1"/>
</dbReference>
<dbReference type="FunFam" id="3.40.50.2000:FF:000016">
    <property type="entry name" value="UDP-N-acetylglucosamine--N-acetylmuramyl-(pentapeptide) pyrophosphoryl-undecaprenol N-acetylglucosamine transferase"/>
    <property type="match status" value="1"/>
</dbReference>
<dbReference type="FunFam" id="3.40.50.2000:FF:000018">
    <property type="entry name" value="UDP-N-acetylglucosamine--N-acetylmuramyl-(pentapeptide) pyrophosphoryl-undecaprenol N-acetylglucosamine transferase"/>
    <property type="match status" value="1"/>
</dbReference>
<dbReference type="Gene3D" id="3.40.50.2000">
    <property type="entry name" value="Glycogen Phosphorylase B"/>
    <property type="match status" value="2"/>
</dbReference>
<dbReference type="HAMAP" id="MF_00033">
    <property type="entry name" value="MurG"/>
    <property type="match status" value="1"/>
</dbReference>
<dbReference type="InterPro" id="IPR006009">
    <property type="entry name" value="GlcNAc_MurG"/>
</dbReference>
<dbReference type="InterPro" id="IPR007235">
    <property type="entry name" value="Glyco_trans_28_C"/>
</dbReference>
<dbReference type="InterPro" id="IPR004276">
    <property type="entry name" value="GlycoTrans_28_N"/>
</dbReference>
<dbReference type="NCBIfam" id="TIGR01133">
    <property type="entry name" value="murG"/>
    <property type="match status" value="1"/>
</dbReference>
<dbReference type="PANTHER" id="PTHR21015:SF22">
    <property type="entry name" value="GLYCOSYLTRANSFERASE"/>
    <property type="match status" value="1"/>
</dbReference>
<dbReference type="PANTHER" id="PTHR21015">
    <property type="entry name" value="UDP-N-ACETYLGLUCOSAMINE--N-ACETYLMURAMYL-(PENTAPEPTIDE) PYROPHOSPHORYL-UNDECAPRENOL N-ACETYLGLUCOSAMINE TRANSFERASE 1"/>
    <property type="match status" value="1"/>
</dbReference>
<dbReference type="Pfam" id="PF04101">
    <property type="entry name" value="Glyco_tran_28_C"/>
    <property type="match status" value="1"/>
</dbReference>
<dbReference type="Pfam" id="PF03033">
    <property type="entry name" value="Glyco_transf_28"/>
    <property type="match status" value="1"/>
</dbReference>
<dbReference type="SUPFAM" id="SSF53756">
    <property type="entry name" value="UDP-Glycosyltransferase/glycogen phosphorylase"/>
    <property type="match status" value="1"/>
</dbReference>
<organism>
    <name type="scientific">Escherichia coli O6:H1 (strain CFT073 / ATCC 700928 / UPEC)</name>
    <dbReference type="NCBI Taxonomy" id="199310"/>
    <lineage>
        <taxon>Bacteria</taxon>
        <taxon>Pseudomonadati</taxon>
        <taxon>Pseudomonadota</taxon>
        <taxon>Gammaproteobacteria</taxon>
        <taxon>Enterobacterales</taxon>
        <taxon>Enterobacteriaceae</taxon>
        <taxon>Escherichia</taxon>
    </lineage>
</organism>
<feature type="initiator methionine" description="Removed" evidence="1">
    <location>
        <position position="1"/>
    </location>
</feature>
<feature type="chain" id="PRO_0000109171" description="UDP-N-acetylglucosamine--N-acetylmuramyl-(pentapeptide) pyrophosphoryl-undecaprenol N-acetylglucosamine transferase">
    <location>
        <begin position="2"/>
        <end position="355"/>
    </location>
</feature>
<feature type="binding site" evidence="2">
    <location>
        <begin position="15"/>
        <end position="17"/>
    </location>
    <ligand>
        <name>UDP-N-acetyl-alpha-D-glucosamine</name>
        <dbReference type="ChEBI" id="CHEBI:57705"/>
    </ligand>
</feature>
<feature type="binding site" evidence="2">
    <location>
        <position position="127"/>
    </location>
    <ligand>
        <name>UDP-N-acetyl-alpha-D-glucosamine</name>
        <dbReference type="ChEBI" id="CHEBI:57705"/>
    </ligand>
</feature>
<feature type="binding site" evidence="2">
    <location>
        <position position="163"/>
    </location>
    <ligand>
        <name>UDP-N-acetyl-alpha-D-glucosamine</name>
        <dbReference type="ChEBI" id="CHEBI:57705"/>
    </ligand>
</feature>
<feature type="binding site" evidence="2">
    <location>
        <position position="191"/>
    </location>
    <ligand>
        <name>UDP-N-acetyl-alpha-D-glucosamine</name>
        <dbReference type="ChEBI" id="CHEBI:57705"/>
    </ligand>
</feature>
<feature type="binding site" evidence="2">
    <location>
        <position position="244"/>
    </location>
    <ligand>
        <name>UDP-N-acetyl-alpha-D-glucosamine</name>
        <dbReference type="ChEBI" id="CHEBI:57705"/>
    </ligand>
</feature>
<feature type="binding site" evidence="2">
    <location>
        <begin position="263"/>
        <end position="268"/>
    </location>
    <ligand>
        <name>UDP-N-acetyl-alpha-D-glucosamine</name>
        <dbReference type="ChEBI" id="CHEBI:57705"/>
    </ligand>
</feature>
<feature type="binding site" evidence="2">
    <location>
        <position position="288"/>
    </location>
    <ligand>
        <name>UDP-N-acetyl-alpha-D-glucosamine</name>
        <dbReference type="ChEBI" id="CHEBI:57705"/>
    </ligand>
</feature>
<gene>
    <name evidence="2" type="primary">murG</name>
    <name type="ordered locus">c0108</name>
</gene>
<sequence>MSGQGKRLMVMAGGTGGHVFPGLAVAHHLMAQGWQVRWLGTADRMEADLVPKHGIEIDFIRISGLRGKGIKALIAAPLRIFNAWRQARAIMKAYKPDVVLGMGGYVSGPGGLAAWSLGIPVVLHEQNGIAGLTNKWLAKIATKVMQAFPGAFPNAEVVGNPVRTDVLALPLPQQRLAGREGPVRVLVVGGSQGARILNQTMPQVAAKLGDSVTIWHQSGKGSQQSVEQAYAEAGQPQHKVTEFIDDMAAAYAWADVVVCRSGALTVSEIAAAGLPALFVPFQHKDRQQYWNALPLEKAGAAKIIEQSQLSVDAVANTLAGWSRETLLTMAERARAASIPDATERVANEVSRAARA</sequence>
<accession>Q8FL64</accession>
<proteinExistence type="inferred from homology"/>
<evidence type="ECO:0000250" key="1"/>
<evidence type="ECO:0000255" key="2">
    <source>
        <dbReference type="HAMAP-Rule" id="MF_00033"/>
    </source>
</evidence>
<keyword id="KW-0131">Cell cycle</keyword>
<keyword id="KW-0132">Cell division</keyword>
<keyword id="KW-0997">Cell inner membrane</keyword>
<keyword id="KW-1003">Cell membrane</keyword>
<keyword id="KW-0133">Cell shape</keyword>
<keyword id="KW-0961">Cell wall biogenesis/degradation</keyword>
<keyword id="KW-0328">Glycosyltransferase</keyword>
<keyword id="KW-0472">Membrane</keyword>
<keyword id="KW-0573">Peptidoglycan synthesis</keyword>
<keyword id="KW-1185">Reference proteome</keyword>
<keyword id="KW-0808">Transferase</keyword>